<dbReference type="EMBL" id="AF020044">
    <property type="protein sequence ID" value="AAC39569.1"/>
    <property type="molecule type" value="mRNA"/>
</dbReference>
<dbReference type="EMBL" id="AB009244">
    <property type="protein sequence ID" value="BAA32404.1"/>
    <property type="molecule type" value="mRNA"/>
</dbReference>
<dbReference type="EMBL" id="AF087658">
    <property type="protein sequence ID" value="AAD26533.1"/>
    <property type="molecule type" value="Genomic_DNA"/>
</dbReference>
<dbReference type="EMBL" id="AK314141">
    <property type="protein sequence ID" value="BAG36831.1"/>
    <property type="molecule type" value="mRNA"/>
</dbReference>
<dbReference type="EMBL" id="CH471135">
    <property type="protein sequence ID" value="EAW71896.1"/>
    <property type="molecule type" value="Genomic_DNA"/>
</dbReference>
<dbReference type="EMBL" id="BC005810">
    <property type="protein sequence ID" value="AAH05810.1"/>
    <property type="molecule type" value="mRNA"/>
</dbReference>
<dbReference type="CCDS" id="CCDS12800.1"/>
<dbReference type="RefSeq" id="NP_002966.1">
    <property type="nucleotide sequence ID" value="NM_002975.3"/>
</dbReference>
<dbReference type="SMR" id="Q9Y240"/>
<dbReference type="BioGRID" id="112226">
    <property type="interactions" value="107"/>
</dbReference>
<dbReference type="FunCoup" id="Q9Y240">
    <property type="interactions" value="329"/>
</dbReference>
<dbReference type="IntAct" id="Q9Y240">
    <property type="interactions" value="97"/>
</dbReference>
<dbReference type="STRING" id="9606.ENSP00000250340"/>
<dbReference type="GlyCosmos" id="Q9Y240">
    <property type="glycosylation" value="5 sites, 6 glycans"/>
</dbReference>
<dbReference type="GlyGen" id="Q9Y240">
    <property type="glycosylation" value="8 sites, 8 O-linked glycans (7 sites)"/>
</dbReference>
<dbReference type="iPTMnet" id="Q9Y240"/>
<dbReference type="PhosphoSitePlus" id="Q9Y240"/>
<dbReference type="BioMuta" id="CLEC11A"/>
<dbReference type="DMDM" id="34223087"/>
<dbReference type="jPOST" id="Q9Y240"/>
<dbReference type="MassIVE" id="Q9Y240"/>
<dbReference type="PaxDb" id="9606-ENSP00000250340"/>
<dbReference type="PeptideAtlas" id="Q9Y240"/>
<dbReference type="ProteomicsDB" id="85637"/>
<dbReference type="Pumba" id="Q9Y240"/>
<dbReference type="Antibodypedia" id="32362">
    <property type="antibodies" value="300 antibodies from 27 providers"/>
</dbReference>
<dbReference type="DNASU" id="6320"/>
<dbReference type="Ensembl" id="ENST00000250340.9">
    <property type="protein sequence ID" value="ENSP00000250340.3"/>
    <property type="gene ID" value="ENSG00000105472.14"/>
</dbReference>
<dbReference type="GeneID" id="6320"/>
<dbReference type="KEGG" id="hsa:6320"/>
<dbReference type="MANE-Select" id="ENST00000250340.9">
    <property type="protein sequence ID" value="ENSP00000250340.3"/>
    <property type="RefSeq nucleotide sequence ID" value="NM_002975.3"/>
    <property type="RefSeq protein sequence ID" value="NP_002966.1"/>
</dbReference>
<dbReference type="UCSC" id="uc002psy.4">
    <property type="organism name" value="human"/>
</dbReference>
<dbReference type="AGR" id="HGNC:10576"/>
<dbReference type="CTD" id="6320"/>
<dbReference type="DisGeNET" id="6320"/>
<dbReference type="GeneCards" id="CLEC11A"/>
<dbReference type="HGNC" id="HGNC:10576">
    <property type="gene designation" value="CLEC11A"/>
</dbReference>
<dbReference type="HPA" id="ENSG00000105472">
    <property type="expression patterns" value="Tissue enhanced (bone)"/>
</dbReference>
<dbReference type="MIM" id="604713">
    <property type="type" value="gene"/>
</dbReference>
<dbReference type="neXtProt" id="NX_Q9Y240"/>
<dbReference type="OpenTargets" id="ENSG00000105472"/>
<dbReference type="PharmGKB" id="PA34996"/>
<dbReference type="VEuPathDB" id="HostDB:ENSG00000105472"/>
<dbReference type="eggNOG" id="KOG4297">
    <property type="taxonomic scope" value="Eukaryota"/>
</dbReference>
<dbReference type="GeneTree" id="ENSGT00950000183186"/>
<dbReference type="HOGENOM" id="CLU_074832_0_0_1"/>
<dbReference type="InParanoid" id="Q9Y240"/>
<dbReference type="OMA" id="EMTDQED"/>
<dbReference type="OrthoDB" id="441660at2759"/>
<dbReference type="PAN-GO" id="Q9Y240">
    <property type="GO annotations" value="3 GO annotations based on evolutionary models"/>
</dbReference>
<dbReference type="PhylomeDB" id="Q9Y240"/>
<dbReference type="TreeFam" id="TF330481"/>
<dbReference type="PathwayCommons" id="Q9Y240"/>
<dbReference type="SignaLink" id="Q9Y240"/>
<dbReference type="BioGRID-ORCS" id="6320">
    <property type="hits" value="22 hits in 1150 CRISPR screens"/>
</dbReference>
<dbReference type="GeneWiki" id="CLEC11A"/>
<dbReference type="GenomeRNAi" id="6320"/>
<dbReference type="Pharos" id="Q9Y240">
    <property type="development level" value="Tbio"/>
</dbReference>
<dbReference type="PRO" id="PR:Q9Y240"/>
<dbReference type="Proteomes" id="UP000005640">
    <property type="component" value="Chromosome 19"/>
</dbReference>
<dbReference type="RNAct" id="Q9Y240">
    <property type="molecule type" value="protein"/>
</dbReference>
<dbReference type="Bgee" id="ENSG00000105472">
    <property type="expression patterns" value="Expressed in stromal cell of endometrium and 123 other cell types or tissues"/>
</dbReference>
<dbReference type="ExpressionAtlas" id="Q9Y240">
    <property type="expression patterns" value="baseline and differential"/>
</dbReference>
<dbReference type="GO" id="GO:0005737">
    <property type="term" value="C:cytoplasm"/>
    <property type="evidence" value="ECO:0007669"/>
    <property type="project" value="UniProtKB-SubCell"/>
</dbReference>
<dbReference type="GO" id="GO:0005576">
    <property type="term" value="C:extracellular region"/>
    <property type="evidence" value="ECO:0000314"/>
    <property type="project" value="UniProtKB"/>
</dbReference>
<dbReference type="GO" id="GO:0005615">
    <property type="term" value="C:extracellular space"/>
    <property type="evidence" value="ECO:0007005"/>
    <property type="project" value="UniProtKB"/>
</dbReference>
<dbReference type="GO" id="GO:0030246">
    <property type="term" value="F:carbohydrate binding"/>
    <property type="evidence" value="ECO:0000303"/>
    <property type="project" value="UniProtKB"/>
</dbReference>
<dbReference type="GO" id="GO:0008083">
    <property type="term" value="F:growth factor activity"/>
    <property type="evidence" value="ECO:0000314"/>
    <property type="project" value="UniProtKB"/>
</dbReference>
<dbReference type="GO" id="GO:0001503">
    <property type="term" value="P:ossification"/>
    <property type="evidence" value="ECO:0000318"/>
    <property type="project" value="GO_Central"/>
</dbReference>
<dbReference type="GO" id="GO:0008284">
    <property type="term" value="P:positive regulation of cell population proliferation"/>
    <property type="evidence" value="ECO:0000314"/>
    <property type="project" value="UniProtKB"/>
</dbReference>
<dbReference type="CDD" id="cd03596">
    <property type="entry name" value="CLECT_tetranectin_like"/>
    <property type="match status" value="1"/>
</dbReference>
<dbReference type="FunFam" id="3.10.100.10:FF:000054">
    <property type="entry name" value="C-type lectin domain family 11 member A"/>
    <property type="match status" value="1"/>
</dbReference>
<dbReference type="Gene3D" id="3.10.100.10">
    <property type="entry name" value="Mannose-Binding Protein A, subunit A"/>
    <property type="match status" value="1"/>
</dbReference>
<dbReference type="InterPro" id="IPR001304">
    <property type="entry name" value="C-type_lectin-like"/>
</dbReference>
<dbReference type="InterPro" id="IPR016186">
    <property type="entry name" value="C-type_lectin-like/link_sf"/>
</dbReference>
<dbReference type="InterPro" id="IPR018378">
    <property type="entry name" value="C-type_lectin_CS"/>
</dbReference>
<dbReference type="InterPro" id="IPR051663">
    <property type="entry name" value="CLec_Tetranectin-domain"/>
</dbReference>
<dbReference type="InterPro" id="IPR016187">
    <property type="entry name" value="CTDL_fold"/>
</dbReference>
<dbReference type="PANTHER" id="PTHR22799:SF1">
    <property type="entry name" value="C-TYPE LECTIN DOMAIN FAMILY 11 MEMBER A"/>
    <property type="match status" value="1"/>
</dbReference>
<dbReference type="PANTHER" id="PTHR22799">
    <property type="entry name" value="TETRANECTIN-RELATED"/>
    <property type="match status" value="1"/>
</dbReference>
<dbReference type="Pfam" id="PF00059">
    <property type="entry name" value="Lectin_C"/>
    <property type="match status" value="1"/>
</dbReference>
<dbReference type="SMART" id="SM00034">
    <property type="entry name" value="CLECT"/>
    <property type="match status" value="1"/>
</dbReference>
<dbReference type="SUPFAM" id="SSF56436">
    <property type="entry name" value="C-type lectin-like"/>
    <property type="match status" value="1"/>
</dbReference>
<dbReference type="PROSITE" id="PS00615">
    <property type="entry name" value="C_TYPE_LECTIN_1"/>
    <property type="match status" value="1"/>
</dbReference>
<dbReference type="PROSITE" id="PS50041">
    <property type="entry name" value="C_TYPE_LECTIN_2"/>
    <property type="match status" value="1"/>
</dbReference>
<proteinExistence type="evidence at protein level"/>
<feature type="signal peptide" evidence="9">
    <location>
        <begin position="1"/>
        <end position="21"/>
    </location>
</feature>
<feature type="chain" id="PRO_0000017468" description="C-type lectin domain family 11 member A">
    <location>
        <begin position="22"/>
        <end position="323"/>
    </location>
</feature>
<feature type="domain" description="C-type lectin" evidence="3">
    <location>
        <begin position="183"/>
        <end position="320"/>
    </location>
</feature>
<feature type="region of interest" description="Disordered" evidence="4">
    <location>
        <begin position="55"/>
        <end position="106"/>
    </location>
</feature>
<feature type="region of interest" description="Disordered" evidence="4">
    <location>
        <begin position="272"/>
        <end position="295"/>
    </location>
</feature>
<feature type="short sequence motif" description="Cell attachment site" evidence="2">
    <location>
        <begin position="61"/>
        <end position="63"/>
    </location>
</feature>
<feature type="compositionally biased region" description="Acidic residues" evidence="4">
    <location>
        <begin position="74"/>
        <end position="90"/>
    </location>
</feature>
<feature type="disulfide bond" evidence="3">
    <location>
        <begin position="204"/>
        <end position="319"/>
    </location>
</feature>
<feature type="disulfide bond" evidence="3">
    <location>
        <begin position="296"/>
        <end position="311"/>
    </location>
</feature>
<feature type="sequence variant" id="VAR_050116" description="In dbSNP:rs2303688.">
    <original>P</original>
    <variation>R</variation>
    <location>
        <position position="104"/>
    </location>
</feature>
<accession>Q9Y240</accession>
<accession>B2RAD4</accession>
<evidence type="ECO:0000250" key="1">
    <source>
        <dbReference type="UniProtKB" id="O88200"/>
    </source>
</evidence>
<evidence type="ECO:0000255" key="2"/>
<evidence type="ECO:0000255" key="3">
    <source>
        <dbReference type="PROSITE-ProRule" id="PRU00040"/>
    </source>
</evidence>
<evidence type="ECO:0000256" key="4">
    <source>
        <dbReference type="SAM" id="MobiDB-lite"/>
    </source>
</evidence>
<evidence type="ECO:0000269" key="5">
    <source>
    </source>
</evidence>
<evidence type="ECO:0000269" key="6">
    <source>
    </source>
</evidence>
<evidence type="ECO:0000269" key="7">
    <source>
    </source>
</evidence>
<evidence type="ECO:0000269" key="8">
    <source>
    </source>
</evidence>
<evidence type="ECO:0000269" key="9">
    <source>
    </source>
</evidence>
<evidence type="ECO:0000269" key="10">
    <source>
    </source>
</evidence>
<evidence type="ECO:0000303" key="11">
    <source>
    </source>
</evidence>
<evidence type="ECO:0000303" key="12">
    <source>
    </source>
</evidence>
<evidence type="ECO:0000305" key="13"/>
<evidence type="ECO:0000312" key="14">
    <source>
        <dbReference type="EMBL" id="AAH05810.1"/>
    </source>
</evidence>
<protein>
    <recommendedName>
        <fullName>C-type lectin domain family 11 member A</fullName>
    </recommendedName>
    <alternativeName>
        <fullName>C-type lectin superfamily member 3</fullName>
    </alternativeName>
    <alternativeName>
        <fullName>Lymphocyte secreted C-type lectin</fullName>
    </alternativeName>
    <alternativeName>
        <fullName evidence="11">Osteolectin</fullName>
    </alternativeName>
    <alternativeName>
        <fullName>Stem cell growth factor</fullName>
    </alternativeName>
    <alternativeName>
        <fullName>p47</fullName>
    </alternativeName>
</protein>
<name>CLC11_HUMAN</name>
<keyword id="KW-0963">Cytoplasm</keyword>
<keyword id="KW-0903">Direct protein sequencing</keyword>
<keyword id="KW-1015">Disulfide bond</keyword>
<keyword id="KW-0325">Glycoprotein</keyword>
<keyword id="KW-0339">Growth factor</keyword>
<keyword id="KW-0430">Lectin</keyword>
<keyword id="KW-0892">Osteogenesis</keyword>
<keyword id="KW-1267">Proteomics identification</keyword>
<keyword id="KW-1185">Reference proteome</keyword>
<keyword id="KW-0964">Secreted</keyword>
<keyword id="KW-0732">Signal</keyword>
<organism evidence="14">
    <name type="scientific">Homo sapiens</name>
    <name type="common">Human</name>
    <dbReference type="NCBI Taxonomy" id="9606"/>
    <lineage>
        <taxon>Eukaryota</taxon>
        <taxon>Metazoa</taxon>
        <taxon>Chordata</taxon>
        <taxon>Craniata</taxon>
        <taxon>Vertebrata</taxon>
        <taxon>Euteleostomi</taxon>
        <taxon>Mammalia</taxon>
        <taxon>Eutheria</taxon>
        <taxon>Euarchontoglires</taxon>
        <taxon>Primates</taxon>
        <taxon>Haplorrhini</taxon>
        <taxon>Catarrhini</taxon>
        <taxon>Hominidae</taxon>
        <taxon>Homo</taxon>
    </lineage>
</organism>
<comment type="function">
    <text evidence="1 8">Promotes osteogenesis by stimulating the differentiation of mesenchymal progenitors into mature osteoblasts (PubMed:27976999). Important for repair and maintenance of adult bone (By similarity).</text>
</comment>
<comment type="interaction">
    <interactant intactId="EBI-3957044">
        <id>Q9Y240</id>
    </interactant>
    <interactant intactId="EBI-747754">
        <id>P28799</id>
        <label>GRN</label>
    </interactant>
    <organismsDiffer>false</organismsDiffer>
    <experiments>3</experiments>
</comment>
<comment type="interaction">
    <interactant intactId="EBI-3957044">
        <id>Q9Y240</id>
    </interactant>
    <interactant intactId="EBI-466029">
        <id>P42858</id>
        <label>HTT</label>
    </interactant>
    <organismsDiffer>false</organismsDiffer>
    <experiments>12</experiments>
</comment>
<comment type="interaction">
    <interactant intactId="EBI-3957044">
        <id>Q9Y240</id>
    </interactant>
    <interactant intactId="EBI-475646">
        <id>P07196</id>
        <label>NEFL</label>
    </interactant>
    <organismsDiffer>false</organismsDiffer>
    <experiments>3</experiments>
</comment>
<comment type="interaction">
    <interactant intactId="EBI-3957044">
        <id>Q9Y240</id>
    </interactant>
    <interactant intactId="EBI-711909">
        <id>P02766</id>
        <label>TTR</label>
    </interactant>
    <organismsDiffer>false</organismsDiffer>
    <experiments>3</experiments>
</comment>
<comment type="interaction">
    <interactant intactId="EBI-3957044">
        <id>Q9Y240</id>
    </interactant>
    <interactant intactId="EBI-947187">
        <id>Q9UHD9</id>
        <label>UBQLN2</label>
    </interactant>
    <organismsDiffer>false</organismsDiffer>
    <experiments>3</experiments>
</comment>
<comment type="interaction">
    <interactant intactId="EBI-3957044">
        <id>Q9Y240</id>
    </interactant>
    <interactant intactId="EBI-720609">
        <id>O76024</id>
        <label>WFS1</label>
    </interactant>
    <organismsDiffer>false</organismsDiffer>
    <experiments>3</experiments>
</comment>
<comment type="subcellular location">
    <subcellularLocation>
        <location evidence="5">Cytoplasm</location>
    </subcellularLocation>
    <subcellularLocation>
        <location evidence="5 9">Secreted</location>
    </subcellularLocation>
</comment>
<comment type="tissue specificity">
    <text evidence="5 6 9 10">Expressed in skeletal tissues including bone marrow, chondrocytes, primary ossification center-associated cells, the perichondrium and periosteum. Lower levels of expression were detected in spleen, thymus, appendix and fetal liver.</text>
</comment>
<comment type="developmental stage">
    <text evidence="5">In the bone marrow, expression is limited to immature neutrophils. Expression was not detected in circulating mature neutrophils.</text>
</comment>
<comment type="PTM">
    <text evidence="12">O-glycosylated. Probably sulfated on the O-glycans.</text>
</comment>
<comment type="online information" name="Functional Glycomics Gateway - Glycan Binding">
    <link uri="http://www.functionalglycomics.org/glycomics/GBPServlet?&amp;operationType=view&amp;cbpId=cbp_hum_Ctlect_259"/>
    <text>Stem cell growth factor</text>
</comment>
<sequence length="323" mass="35695">MQAAWLLGALVVPQLLGFGHGARGAEREWEGGWGGAQEEEREREALMLKHLQEALGLPAGRGDENPAGTVEGKEDWEMEEDQGEEEEEEATPTPSSGPSPSPTPEDIVTYILGRLAGLDAGLHQLHVRLHALDTRVVELTQGLRQLRNAAGDTRDAVQALQEAQGRAEREHGRLEGCLKGLRLGHKCFLLSRDFEAQAAAQARCTARGGSLAQPADRQQMEALTRYLRAALAPYNWPVWLGVHDRRAEGLYLFENGQRVSFFAWHRSPRPELGAQPSASPHPLSPDQPNGGTLENCVAQASDDGSWWDHDCQRRLYYVCEFPF</sequence>
<gene>
    <name type="primary">CLEC11A</name>
    <name type="synonym">CLECSF3</name>
    <name type="synonym">LSLCL</name>
    <name type="synonym">SCGF</name>
</gene>
<reference evidence="13" key="1">
    <citation type="journal article" date="1998" name="J. Biol. Chem.">
        <title>Molecular cloning of a new secreted sulfated mucin-like protein with a C-type lectin domain that is expressed in lymphoblastic cells.</title>
        <authorList>
            <person name="Bannwarth S."/>
            <person name="Giordanengo V."/>
            <person name="Lesimple J."/>
            <person name="Lefebvre J.-C."/>
        </authorList>
    </citation>
    <scope>NUCLEOTIDE SEQUENCE [MRNA]</scope>
    <scope>PROTEIN SEQUENCE OF 22-39; 229-243 AND 314-323</scope>
    <scope>SUBCELLULAR LOCATION</scope>
    <scope>TISSUE SPECIFICITY</scope>
    <scope>GLYCOSYLATION</scope>
    <source>
        <tissue evidence="9">Bone marrow</tissue>
    </source>
</reference>
<reference evidence="13" key="2">
    <citation type="journal article" date="1998" name="Biochem. Biophys. Res. Commun.">
        <title>Isolation and characterization of a cDNA for human, mouse, and rat full-length stem cell growth factor, a new member of C-type lectin superfamily.</title>
        <authorList>
            <person name="Mio H."/>
            <person name="Kagami N."/>
            <person name="Yokokawa S."/>
            <person name="Kawai H."/>
            <person name="Nakagawa S."/>
            <person name="Takeuchi K."/>
            <person name="Sekine S."/>
            <person name="Hiraoka A."/>
        </authorList>
    </citation>
    <scope>NUCLEOTIDE SEQUENCE [MRNA]</scope>
    <scope>TISSUE SPECIFICITY</scope>
    <source>
        <tissue evidence="10">Bone marrow</tissue>
    </source>
</reference>
<reference evidence="13" key="3">
    <citation type="journal article" date="1999" name="Genomics">
        <title>Cloning, mapping, and genomic organization of the LSLCL gene, encoding a new lymphocytic secreted mucin-like protein with a C-type lectin domain: a new model of exon shuffling.</title>
        <authorList>
            <person name="Bannwarth S."/>
            <person name="Giordanengo V."/>
            <person name="Grosgeorge J."/>
            <person name="Turc-Carel C."/>
            <person name="Lefebvre J.-C."/>
        </authorList>
    </citation>
    <scope>NUCLEOTIDE SEQUENCE [GENOMIC DNA]</scope>
</reference>
<reference key="4">
    <citation type="journal article" date="2004" name="Nat. Genet.">
        <title>Complete sequencing and characterization of 21,243 full-length human cDNAs.</title>
        <authorList>
            <person name="Ota T."/>
            <person name="Suzuki Y."/>
            <person name="Nishikawa T."/>
            <person name="Otsuki T."/>
            <person name="Sugiyama T."/>
            <person name="Irie R."/>
            <person name="Wakamatsu A."/>
            <person name="Hayashi K."/>
            <person name="Sato H."/>
            <person name="Nagai K."/>
            <person name="Kimura K."/>
            <person name="Makita H."/>
            <person name="Sekine M."/>
            <person name="Obayashi M."/>
            <person name="Nishi T."/>
            <person name="Shibahara T."/>
            <person name="Tanaka T."/>
            <person name="Ishii S."/>
            <person name="Yamamoto J."/>
            <person name="Saito K."/>
            <person name="Kawai Y."/>
            <person name="Isono Y."/>
            <person name="Nakamura Y."/>
            <person name="Nagahari K."/>
            <person name="Murakami K."/>
            <person name="Yasuda T."/>
            <person name="Iwayanagi T."/>
            <person name="Wagatsuma M."/>
            <person name="Shiratori A."/>
            <person name="Sudo H."/>
            <person name="Hosoiri T."/>
            <person name="Kaku Y."/>
            <person name="Kodaira H."/>
            <person name="Kondo H."/>
            <person name="Sugawara M."/>
            <person name="Takahashi M."/>
            <person name="Kanda K."/>
            <person name="Yokoi T."/>
            <person name="Furuya T."/>
            <person name="Kikkawa E."/>
            <person name="Omura Y."/>
            <person name="Abe K."/>
            <person name="Kamihara K."/>
            <person name="Katsuta N."/>
            <person name="Sato K."/>
            <person name="Tanikawa M."/>
            <person name="Yamazaki M."/>
            <person name="Ninomiya K."/>
            <person name="Ishibashi T."/>
            <person name="Yamashita H."/>
            <person name="Murakawa K."/>
            <person name="Fujimori K."/>
            <person name="Tanai H."/>
            <person name="Kimata M."/>
            <person name="Watanabe M."/>
            <person name="Hiraoka S."/>
            <person name="Chiba Y."/>
            <person name="Ishida S."/>
            <person name="Ono Y."/>
            <person name="Takiguchi S."/>
            <person name="Watanabe S."/>
            <person name="Yosida M."/>
            <person name="Hotuta T."/>
            <person name="Kusano J."/>
            <person name="Kanehori K."/>
            <person name="Takahashi-Fujii A."/>
            <person name="Hara H."/>
            <person name="Tanase T.-O."/>
            <person name="Nomura Y."/>
            <person name="Togiya S."/>
            <person name="Komai F."/>
            <person name="Hara R."/>
            <person name="Takeuchi K."/>
            <person name="Arita M."/>
            <person name="Imose N."/>
            <person name="Musashino K."/>
            <person name="Yuuki H."/>
            <person name="Oshima A."/>
            <person name="Sasaki N."/>
            <person name="Aotsuka S."/>
            <person name="Yoshikawa Y."/>
            <person name="Matsunawa H."/>
            <person name="Ichihara T."/>
            <person name="Shiohata N."/>
            <person name="Sano S."/>
            <person name="Moriya S."/>
            <person name="Momiyama H."/>
            <person name="Satoh N."/>
            <person name="Takami S."/>
            <person name="Terashima Y."/>
            <person name="Suzuki O."/>
            <person name="Nakagawa S."/>
            <person name="Senoh A."/>
            <person name="Mizoguchi H."/>
            <person name="Goto Y."/>
            <person name="Shimizu F."/>
            <person name="Wakebe H."/>
            <person name="Hishigaki H."/>
            <person name="Watanabe T."/>
            <person name="Sugiyama A."/>
            <person name="Takemoto M."/>
            <person name="Kawakami B."/>
            <person name="Yamazaki M."/>
            <person name="Watanabe K."/>
            <person name="Kumagai A."/>
            <person name="Itakura S."/>
            <person name="Fukuzumi Y."/>
            <person name="Fujimori Y."/>
            <person name="Komiyama M."/>
            <person name="Tashiro H."/>
            <person name="Tanigami A."/>
            <person name="Fujiwara T."/>
            <person name="Ono T."/>
            <person name="Yamada K."/>
            <person name="Fujii Y."/>
            <person name="Ozaki K."/>
            <person name="Hirao M."/>
            <person name="Ohmori Y."/>
            <person name="Kawabata A."/>
            <person name="Hikiji T."/>
            <person name="Kobatake N."/>
            <person name="Inagaki H."/>
            <person name="Ikema Y."/>
            <person name="Okamoto S."/>
            <person name="Okitani R."/>
            <person name="Kawakami T."/>
            <person name="Noguchi S."/>
            <person name="Itoh T."/>
            <person name="Shigeta K."/>
            <person name="Senba T."/>
            <person name="Matsumura K."/>
            <person name="Nakajima Y."/>
            <person name="Mizuno T."/>
            <person name="Morinaga M."/>
            <person name="Sasaki M."/>
            <person name="Togashi T."/>
            <person name="Oyama M."/>
            <person name="Hata H."/>
            <person name="Watanabe M."/>
            <person name="Komatsu T."/>
            <person name="Mizushima-Sugano J."/>
            <person name="Satoh T."/>
            <person name="Shirai Y."/>
            <person name="Takahashi Y."/>
            <person name="Nakagawa K."/>
            <person name="Okumura K."/>
            <person name="Nagase T."/>
            <person name="Nomura N."/>
            <person name="Kikuchi H."/>
            <person name="Masuho Y."/>
            <person name="Yamashita R."/>
            <person name="Nakai K."/>
            <person name="Yada T."/>
            <person name="Nakamura Y."/>
            <person name="Ohara O."/>
            <person name="Isogai T."/>
            <person name="Sugano S."/>
        </authorList>
    </citation>
    <scope>NUCLEOTIDE SEQUENCE [LARGE SCALE MRNA]</scope>
    <source>
        <tissue>Heart</tissue>
    </source>
</reference>
<reference key="5">
    <citation type="submission" date="2005-07" db="EMBL/GenBank/DDBJ databases">
        <authorList>
            <person name="Mural R.J."/>
            <person name="Istrail S."/>
            <person name="Sutton G.G."/>
            <person name="Florea L."/>
            <person name="Halpern A.L."/>
            <person name="Mobarry C.M."/>
            <person name="Lippert R."/>
            <person name="Walenz B."/>
            <person name="Shatkay H."/>
            <person name="Dew I."/>
            <person name="Miller J.R."/>
            <person name="Flanigan M.J."/>
            <person name="Edwards N.J."/>
            <person name="Bolanos R."/>
            <person name="Fasulo D."/>
            <person name="Halldorsson B.V."/>
            <person name="Hannenhalli S."/>
            <person name="Turner R."/>
            <person name="Yooseph S."/>
            <person name="Lu F."/>
            <person name="Nusskern D.R."/>
            <person name="Shue B.C."/>
            <person name="Zheng X.H."/>
            <person name="Zhong F."/>
            <person name="Delcher A.L."/>
            <person name="Huson D.H."/>
            <person name="Kravitz S.A."/>
            <person name="Mouchard L."/>
            <person name="Reinert K."/>
            <person name="Remington K.A."/>
            <person name="Clark A.G."/>
            <person name="Waterman M.S."/>
            <person name="Eichler E.E."/>
            <person name="Adams M.D."/>
            <person name="Hunkapiller M.W."/>
            <person name="Myers E.W."/>
            <person name="Venter J.C."/>
        </authorList>
    </citation>
    <scope>NUCLEOTIDE SEQUENCE [LARGE SCALE GENOMIC DNA]</scope>
</reference>
<reference evidence="13" key="6">
    <citation type="journal article" date="2004" name="Genome Res.">
        <title>The status, quality, and expansion of the NIH full-length cDNA project: the Mammalian Gene Collection (MGC).</title>
        <authorList>
            <consortium name="The MGC Project Team"/>
        </authorList>
    </citation>
    <scope>NUCLEOTIDE SEQUENCE [LARGE SCALE MRNA]</scope>
    <source>
        <tissue evidence="7">Skin</tissue>
    </source>
</reference>
<reference evidence="13" key="7">
    <citation type="journal article" date="2001" name="Hematol. J.">
        <title>Stem cell growth factor: in situ hybridization analysis on the gene expression, molecular characterization and in vitro proliferative activity of a recombinant preparation on primitive hematopoietic progenitor cells.</title>
        <authorList>
            <person name="Hiraoka A."/>
            <person name="Yano K."/>
            <person name="Kagami N."/>
            <person name="Takeshige K."/>
            <person name="Mio H."/>
            <person name="Anazawa H."/>
            <person name="Sugimoto S."/>
        </authorList>
    </citation>
    <scope>TISSUE SPECIFICITY</scope>
</reference>
<reference evidence="13" key="8">
    <citation type="journal article" date="2001" name="C. R. Acad. Sci. III, Sci. Vie">
        <title>Expression of LSLCL, a new C-type lectin, is closely restricted, in bone marrow, to immature neutrophils.</title>
        <authorList>
            <person name="Perrin C."/>
            <person name="Bayle J."/>
            <person name="Bannwarth S."/>
            <person name="Michiels J.-F."/>
            <person name="Heudier P."/>
            <person name="Lefebvre J.-C."/>
            <person name="Giordanengo V."/>
        </authorList>
    </citation>
    <scope>SUBCELLULAR LOCATION</scope>
    <scope>TISSUE SPECIFICITY</scope>
    <scope>DEVELOPMENTAL STAGE</scope>
</reference>
<reference key="9">
    <citation type="journal article" date="2015" name="Proteomics">
        <title>N-terminome analysis of the human mitochondrial proteome.</title>
        <authorList>
            <person name="Vaca Jacome A.S."/>
            <person name="Rabilloud T."/>
            <person name="Schaeffer-Reiss C."/>
            <person name="Rompais M."/>
            <person name="Ayoub D."/>
            <person name="Lane L."/>
            <person name="Bairoch A."/>
            <person name="Van Dorsselaer A."/>
            <person name="Carapito C."/>
        </authorList>
    </citation>
    <scope>IDENTIFICATION BY MASS SPECTROMETRY [LARGE SCALE ANALYSIS]</scope>
</reference>
<reference key="10">
    <citation type="journal article" date="2016" name="Elife">
        <title>Clec11a/osteolectin is an osteogenic growth factor that promotes the maintenance of the adult skeleton.</title>
        <authorList>
            <person name="Yue R."/>
            <person name="Shen B."/>
            <person name="Morrison S.J."/>
        </authorList>
    </citation>
    <scope>FUNCTION</scope>
</reference>